<dbReference type="EMBL" id="AB065525">
    <property type="protein sequence ID" value="BAC05773.1"/>
    <property type="molecule type" value="Genomic_DNA"/>
</dbReference>
<dbReference type="EMBL" id="CH471064">
    <property type="protein sequence ID" value="EAW68822.1"/>
    <property type="molecule type" value="Genomic_DNA"/>
</dbReference>
<dbReference type="EMBL" id="BC137062">
    <property type="protein sequence ID" value="AAI37063.1"/>
    <property type="molecule type" value="mRNA"/>
</dbReference>
<dbReference type="EMBL" id="BC137063">
    <property type="protein sequence ID" value="AAI37064.1"/>
    <property type="molecule type" value="mRNA"/>
</dbReference>
<dbReference type="EMBL" id="BK004284">
    <property type="protein sequence ID" value="DAA04682.1"/>
    <property type="molecule type" value="Genomic_DNA"/>
</dbReference>
<dbReference type="CCDS" id="CCDS31364.1"/>
<dbReference type="RefSeq" id="NP_001004749.1">
    <property type="nucleotide sequence ID" value="NM_001004749.2"/>
</dbReference>
<dbReference type="SMR" id="Q8NH64"/>
<dbReference type="FunCoup" id="Q8NH64">
    <property type="interactions" value="462"/>
</dbReference>
<dbReference type="STRING" id="9606.ENSP00000493162"/>
<dbReference type="GlyCosmos" id="Q8NH64">
    <property type="glycosylation" value="2 sites, No reported glycans"/>
</dbReference>
<dbReference type="GlyGen" id="Q8NH64">
    <property type="glycosylation" value="2 sites"/>
</dbReference>
<dbReference type="iPTMnet" id="Q8NH64"/>
<dbReference type="PhosphoSitePlus" id="Q8NH64"/>
<dbReference type="BioMuta" id="OR51A7"/>
<dbReference type="DMDM" id="38372819"/>
<dbReference type="PaxDb" id="9606-ENSP00000352305"/>
<dbReference type="ProteomicsDB" id="73670"/>
<dbReference type="Antibodypedia" id="57563">
    <property type="antibodies" value="58 antibodies from 16 providers"/>
</dbReference>
<dbReference type="DNASU" id="119687"/>
<dbReference type="Ensembl" id="ENST00000359350.5">
    <property type="protein sequence ID" value="ENSP00000352305.4"/>
    <property type="gene ID" value="ENSG00000176895.9"/>
</dbReference>
<dbReference type="Ensembl" id="ENST00000641490.1">
    <property type="protein sequence ID" value="ENSP00000493162.1"/>
    <property type="gene ID" value="ENSG00000176895.9"/>
</dbReference>
<dbReference type="GeneID" id="119687"/>
<dbReference type="KEGG" id="hsa:119687"/>
<dbReference type="MANE-Select" id="ENST00000641490.1">
    <property type="protein sequence ID" value="ENSP00000493162.1"/>
    <property type="RefSeq nucleotide sequence ID" value="NM_001004749.2"/>
    <property type="RefSeq protein sequence ID" value="NP_001004749.1"/>
</dbReference>
<dbReference type="UCSC" id="uc010qyq.2">
    <property type="organism name" value="human"/>
</dbReference>
<dbReference type="AGR" id="HGNC:15188"/>
<dbReference type="CTD" id="119687"/>
<dbReference type="GeneCards" id="OR51A7"/>
<dbReference type="HGNC" id="HGNC:15188">
    <property type="gene designation" value="OR51A7"/>
</dbReference>
<dbReference type="HPA" id="ENSG00000176895">
    <property type="expression patterns" value="Not detected"/>
</dbReference>
<dbReference type="neXtProt" id="NX_Q8NH64"/>
<dbReference type="OpenTargets" id="ENSG00000176895"/>
<dbReference type="PharmGKB" id="PA32360"/>
<dbReference type="VEuPathDB" id="HostDB:ENSG00000176895"/>
<dbReference type="eggNOG" id="ENOG502RF9W">
    <property type="taxonomic scope" value="Eukaryota"/>
</dbReference>
<dbReference type="GeneTree" id="ENSGT01130000278286"/>
<dbReference type="HOGENOM" id="CLU_012526_0_0_1"/>
<dbReference type="InParanoid" id="Q8NH64"/>
<dbReference type="OMA" id="CVFHICA"/>
<dbReference type="OrthoDB" id="9444602at2759"/>
<dbReference type="PAN-GO" id="Q8NH64">
    <property type="GO annotations" value="2 GO annotations based on evolutionary models"/>
</dbReference>
<dbReference type="PhylomeDB" id="Q8NH64"/>
<dbReference type="TreeFam" id="TF342735"/>
<dbReference type="PathwayCommons" id="Q8NH64"/>
<dbReference type="Reactome" id="R-HSA-9752946">
    <property type="pathway name" value="Expression and translocation of olfactory receptors"/>
</dbReference>
<dbReference type="BioGRID-ORCS" id="119687">
    <property type="hits" value="9 hits in 741 CRISPR screens"/>
</dbReference>
<dbReference type="GeneWiki" id="OR51A7"/>
<dbReference type="GenomeRNAi" id="119687"/>
<dbReference type="Pharos" id="Q8NH64">
    <property type="development level" value="Tdark"/>
</dbReference>
<dbReference type="PRO" id="PR:Q8NH64"/>
<dbReference type="Proteomes" id="UP000005640">
    <property type="component" value="Chromosome 11"/>
</dbReference>
<dbReference type="RNAct" id="Q8NH64">
    <property type="molecule type" value="protein"/>
</dbReference>
<dbReference type="Bgee" id="ENSG00000176895">
    <property type="expression patterns" value="Expressed in fundus of stomach and 1 other cell type or tissue"/>
</dbReference>
<dbReference type="GO" id="GO:0005886">
    <property type="term" value="C:plasma membrane"/>
    <property type="evidence" value="ECO:0000318"/>
    <property type="project" value="GO_Central"/>
</dbReference>
<dbReference type="GO" id="GO:0004930">
    <property type="term" value="F:G protein-coupled receptor activity"/>
    <property type="evidence" value="ECO:0007669"/>
    <property type="project" value="UniProtKB-KW"/>
</dbReference>
<dbReference type="GO" id="GO:0004984">
    <property type="term" value="F:olfactory receptor activity"/>
    <property type="evidence" value="ECO:0000318"/>
    <property type="project" value="GO_Central"/>
</dbReference>
<dbReference type="CDD" id="cd15222">
    <property type="entry name" value="7tmA_OR51-like"/>
    <property type="match status" value="1"/>
</dbReference>
<dbReference type="FunFam" id="1.20.1070.10:FF:000002">
    <property type="entry name" value="Olfactory receptor"/>
    <property type="match status" value="1"/>
</dbReference>
<dbReference type="Gene3D" id="1.20.1070.10">
    <property type="entry name" value="Rhodopsin 7-helix transmembrane proteins"/>
    <property type="match status" value="1"/>
</dbReference>
<dbReference type="InterPro" id="IPR000276">
    <property type="entry name" value="GPCR_Rhodpsn"/>
</dbReference>
<dbReference type="InterPro" id="IPR017452">
    <property type="entry name" value="GPCR_Rhodpsn_7TM"/>
</dbReference>
<dbReference type="InterPro" id="IPR000725">
    <property type="entry name" value="Olfact_rcpt"/>
</dbReference>
<dbReference type="InterPro" id="IPR050402">
    <property type="entry name" value="OR51/52/56-like"/>
</dbReference>
<dbReference type="PANTHER" id="PTHR26450:SF411">
    <property type="entry name" value="OLFACTORY RECEPTOR 51A7"/>
    <property type="match status" value="1"/>
</dbReference>
<dbReference type="PANTHER" id="PTHR26450">
    <property type="entry name" value="OLFACTORY RECEPTOR 56B1-RELATED"/>
    <property type="match status" value="1"/>
</dbReference>
<dbReference type="Pfam" id="PF13853">
    <property type="entry name" value="7tm_4"/>
    <property type="match status" value="1"/>
</dbReference>
<dbReference type="PRINTS" id="PR00237">
    <property type="entry name" value="GPCRRHODOPSN"/>
</dbReference>
<dbReference type="PRINTS" id="PR00245">
    <property type="entry name" value="OLFACTORYR"/>
</dbReference>
<dbReference type="SUPFAM" id="SSF81321">
    <property type="entry name" value="Family A G protein-coupled receptor-like"/>
    <property type="match status" value="1"/>
</dbReference>
<dbReference type="PROSITE" id="PS00237">
    <property type="entry name" value="G_PROTEIN_RECEP_F1_1"/>
    <property type="match status" value="1"/>
</dbReference>
<dbReference type="PROSITE" id="PS50262">
    <property type="entry name" value="G_PROTEIN_RECEP_F1_2"/>
    <property type="match status" value="1"/>
</dbReference>
<sequence length="312" mass="35132">MSVLNNSEVKLFLLIGIPGLEHAHIWFSIPICLMYLLAIMGNCTILFIIKTEPSLHEPMYYFLAMLAVSDMGLSLSSLPTMLRVFLFNAMGISPNACFAQEFFIHGFTVMESSVLLIMSLDRFLAIHNPLRYSSILTSNRVAKMGLILAIRSILLVIPFPFTLRRLKYCQKNLLSHSYCLHQDTMKLACSDNKTNVIYGFFIALCTMLDLALIVLSYVLILKTILSIASLAERLKALNTCVSHICAVLTFYVPIITLAAMHHFAKHKSPLVVILIADMFLLVPPLMNPIVYCVKTRQIWEKILGKLLNVCGR</sequence>
<comment type="function">
    <text evidence="3">Odorant receptor.</text>
</comment>
<comment type="subcellular location">
    <subcellularLocation>
        <location>Cell membrane</location>
        <topology>Multi-pass membrane protein</topology>
    </subcellularLocation>
</comment>
<comment type="similarity">
    <text evidence="2">Belongs to the G-protein coupled receptor 1 family.</text>
</comment>
<comment type="online information" name="Human Olfactory Receptor Data Exploratorium (HORDE)">
    <link uri="http://genome.weizmann.ac.il/horde/card/index/symbol:OR51A7"/>
</comment>
<accession>Q8NH64</accession>
<accession>Q6IFH8</accession>
<reference key="1">
    <citation type="submission" date="2001-07" db="EMBL/GenBank/DDBJ databases">
        <title>Genome-wide discovery and analysis of human seven transmembrane helix receptor genes.</title>
        <authorList>
            <person name="Suwa M."/>
            <person name="Sato T."/>
            <person name="Okouchi I."/>
            <person name="Arita M."/>
            <person name="Futami K."/>
            <person name="Matsumoto S."/>
            <person name="Tsutsumi S."/>
            <person name="Aburatani H."/>
            <person name="Asai K."/>
            <person name="Akiyama Y."/>
        </authorList>
    </citation>
    <scope>NUCLEOTIDE SEQUENCE [GENOMIC DNA]</scope>
</reference>
<reference key="2">
    <citation type="submission" date="2005-09" db="EMBL/GenBank/DDBJ databases">
        <authorList>
            <person name="Mural R.J."/>
            <person name="Istrail S."/>
            <person name="Sutton G.G."/>
            <person name="Florea L."/>
            <person name="Halpern A.L."/>
            <person name="Mobarry C.M."/>
            <person name="Lippert R."/>
            <person name="Walenz B."/>
            <person name="Shatkay H."/>
            <person name="Dew I."/>
            <person name="Miller J.R."/>
            <person name="Flanigan M.J."/>
            <person name="Edwards N.J."/>
            <person name="Bolanos R."/>
            <person name="Fasulo D."/>
            <person name="Halldorsson B.V."/>
            <person name="Hannenhalli S."/>
            <person name="Turner R."/>
            <person name="Yooseph S."/>
            <person name="Lu F."/>
            <person name="Nusskern D.R."/>
            <person name="Shue B.C."/>
            <person name="Zheng X.H."/>
            <person name="Zhong F."/>
            <person name="Delcher A.L."/>
            <person name="Huson D.H."/>
            <person name="Kravitz S.A."/>
            <person name="Mouchard L."/>
            <person name="Reinert K."/>
            <person name="Remington K.A."/>
            <person name="Clark A.G."/>
            <person name="Waterman M.S."/>
            <person name="Eichler E.E."/>
            <person name="Adams M.D."/>
            <person name="Hunkapiller M.W."/>
            <person name="Myers E.W."/>
            <person name="Venter J.C."/>
        </authorList>
    </citation>
    <scope>NUCLEOTIDE SEQUENCE [LARGE SCALE GENOMIC DNA]</scope>
</reference>
<reference key="3">
    <citation type="journal article" date="2004" name="Genome Res.">
        <title>The status, quality, and expansion of the NIH full-length cDNA project: the Mammalian Gene Collection (MGC).</title>
        <authorList>
            <consortium name="The MGC Project Team"/>
        </authorList>
    </citation>
    <scope>NUCLEOTIDE SEQUENCE [LARGE SCALE MRNA]</scope>
</reference>
<reference key="4">
    <citation type="journal article" date="2004" name="Proc. Natl. Acad. Sci. U.S.A.">
        <title>The human olfactory receptor gene family.</title>
        <authorList>
            <person name="Malnic B."/>
            <person name="Godfrey P.A."/>
            <person name="Buck L.B."/>
        </authorList>
    </citation>
    <scope>IDENTIFICATION</scope>
</reference>
<reference key="5">
    <citation type="journal article" date="2004" name="Proc. Natl. Acad. Sci. U.S.A.">
        <authorList>
            <person name="Malnic B."/>
            <person name="Godfrey P.A."/>
            <person name="Buck L.B."/>
        </authorList>
    </citation>
    <scope>ERRATUM OF PUBMED:14983052</scope>
</reference>
<protein>
    <recommendedName>
        <fullName>Olfactory receptor 51A7</fullName>
    </recommendedName>
    <alternativeName>
        <fullName>Olfactory receptor OR11-27</fullName>
    </alternativeName>
</protein>
<proteinExistence type="evidence at transcript level"/>
<name>O51A7_HUMAN</name>
<organism>
    <name type="scientific">Homo sapiens</name>
    <name type="common">Human</name>
    <dbReference type="NCBI Taxonomy" id="9606"/>
    <lineage>
        <taxon>Eukaryota</taxon>
        <taxon>Metazoa</taxon>
        <taxon>Chordata</taxon>
        <taxon>Craniata</taxon>
        <taxon>Vertebrata</taxon>
        <taxon>Euteleostomi</taxon>
        <taxon>Mammalia</taxon>
        <taxon>Eutheria</taxon>
        <taxon>Euarchontoglires</taxon>
        <taxon>Primates</taxon>
        <taxon>Haplorrhini</taxon>
        <taxon>Catarrhini</taxon>
        <taxon>Hominidae</taxon>
        <taxon>Homo</taxon>
    </lineage>
</organism>
<feature type="chain" id="PRO_0000150744" description="Olfactory receptor 51A7">
    <location>
        <begin position="1"/>
        <end position="312"/>
    </location>
</feature>
<feature type="topological domain" description="Extracellular" evidence="1">
    <location>
        <begin position="1"/>
        <end position="25"/>
    </location>
</feature>
<feature type="transmembrane region" description="Helical; Name=1" evidence="1">
    <location>
        <begin position="26"/>
        <end position="46"/>
    </location>
</feature>
<feature type="topological domain" description="Cytoplasmic" evidence="1">
    <location>
        <begin position="47"/>
        <end position="54"/>
    </location>
</feature>
<feature type="transmembrane region" description="Helical; Name=2" evidence="1">
    <location>
        <begin position="55"/>
        <end position="75"/>
    </location>
</feature>
<feature type="topological domain" description="Extracellular" evidence="1">
    <location>
        <begin position="76"/>
        <end position="99"/>
    </location>
</feature>
<feature type="transmembrane region" description="Helical; Name=3" evidence="1">
    <location>
        <begin position="100"/>
        <end position="120"/>
    </location>
</feature>
<feature type="topological domain" description="Cytoplasmic" evidence="1">
    <location>
        <begin position="121"/>
        <end position="139"/>
    </location>
</feature>
<feature type="transmembrane region" description="Helical; Name=4" evidence="1">
    <location>
        <begin position="140"/>
        <end position="160"/>
    </location>
</feature>
<feature type="topological domain" description="Extracellular" evidence="1">
    <location>
        <begin position="161"/>
        <end position="196"/>
    </location>
</feature>
<feature type="transmembrane region" description="Helical; Name=5" evidence="1">
    <location>
        <begin position="197"/>
        <end position="216"/>
    </location>
</feature>
<feature type="topological domain" description="Cytoplasmic" evidence="1">
    <location>
        <begin position="217"/>
        <end position="236"/>
    </location>
</feature>
<feature type="transmembrane region" description="Helical; Name=6" evidence="1">
    <location>
        <begin position="237"/>
        <end position="257"/>
    </location>
</feature>
<feature type="topological domain" description="Extracellular" evidence="1">
    <location>
        <begin position="258"/>
        <end position="272"/>
    </location>
</feature>
<feature type="transmembrane region" description="Helical; Name=7" evidence="1">
    <location>
        <begin position="273"/>
        <end position="293"/>
    </location>
</feature>
<feature type="topological domain" description="Cytoplasmic" evidence="1">
    <location>
        <begin position="294"/>
        <end position="312"/>
    </location>
</feature>
<feature type="glycosylation site" description="N-linked (GlcNAc...) asparagine" evidence="1">
    <location>
        <position position="5"/>
    </location>
</feature>
<feature type="glycosylation site" description="N-linked (GlcNAc...) asparagine" evidence="1">
    <location>
        <position position="192"/>
    </location>
</feature>
<feature type="disulfide bond" evidence="2">
    <location>
        <begin position="97"/>
        <end position="189"/>
    </location>
</feature>
<feature type="sequence variant" id="VAR_024140" description="In dbSNP:rs11034596.">
    <original>E</original>
    <variation>K</variation>
    <location>
        <position position="8"/>
    </location>
</feature>
<feature type="sequence variant" id="VAR_034315" description="In dbSNP:rs7108225.">
    <original>M</original>
    <variation>T</variation>
    <location>
        <position position="81"/>
    </location>
</feature>
<feature type="sequence variant" id="VAR_034316" description="In dbSNP:rs7108654.">
    <original>V</original>
    <variation>A</variation>
    <location>
        <position position="196"/>
    </location>
</feature>
<evidence type="ECO:0000255" key="1"/>
<evidence type="ECO:0000255" key="2">
    <source>
        <dbReference type="PROSITE-ProRule" id="PRU00521"/>
    </source>
</evidence>
<evidence type="ECO:0000305" key="3"/>
<keyword id="KW-1003">Cell membrane</keyword>
<keyword id="KW-1015">Disulfide bond</keyword>
<keyword id="KW-0297">G-protein coupled receptor</keyword>
<keyword id="KW-0325">Glycoprotein</keyword>
<keyword id="KW-0472">Membrane</keyword>
<keyword id="KW-0552">Olfaction</keyword>
<keyword id="KW-0675">Receptor</keyword>
<keyword id="KW-1185">Reference proteome</keyword>
<keyword id="KW-0716">Sensory transduction</keyword>
<keyword id="KW-0807">Transducer</keyword>
<keyword id="KW-0812">Transmembrane</keyword>
<keyword id="KW-1133">Transmembrane helix</keyword>
<gene>
    <name type="primary">OR51A7</name>
</gene>